<name>PROB_SALCH</name>
<gene>
    <name evidence="1" type="primary">proB</name>
    <name type="ordered locus">SCH_0322</name>
</gene>
<proteinExistence type="inferred from homology"/>
<organism>
    <name type="scientific">Salmonella choleraesuis (strain SC-B67)</name>
    <dbReference type="NCBI Taxonomy" id="321314"/>
    <lineage>
        <taxon>Bacteria</taxon>
        <taxon>Pseudomonadati</taxon>
        <taxon>Pseudomonadota</taxon>
        <taxon>Gammaproteobacteria</taxon>
        <taxon>Enterobacterales</taxon>
        <taxon>Enterobacteriaceae</taxon>
        <taxon>Salmonella</taxon>
    </lineage>
</organism>
<protein>
    <recommendedName>
        <fullName evidence="1">Glutamate 5-kinase</fullName>
        <ecNumber evidence="1">2.7.2.11</ecNumber>
    </recommendedName>
    <alternativeName>
        <fullName evidence="1">Gamma-glutamyl kinase</fullName>
        <shortName evidence="1">GK</shortName>
    </alternativeName>
</protein>
<dbReference type="EC" id="2.7.2.11" evidence="1"/>
<dbReference type="EMBL" id="AE017220">
    <property type="protein sequence ID" value="AAX64228.1"/>
    <property type="molecule type" value="Genomic_DNA"/>
</dbReference>
<dbReference type="RefSeq" id="WP_001285275.1">
    <property type="nucleotide sequence ID" value="NC_006905.1"/>
</dbReference>
<dbReference type="SMR" id="Q57ST3"/>
<dbReference type="KEGG" id="sec:SCH_0322"/>
<dbReference type="HOGENOM" id="CLU_025400_2_0_6"/>
<dbReference type="UniPathway" id="UPA00098">
    <property type="reaction ID" value="UER00359"/>
</dbReference>
<dbReference type="Proteomes" id="UP000000538">
    <property type="component" value="Chromosome"/>
</dbReference>
<dbReference type="GO" id="GO:0005829">
    <property type="term" value="C:cytosol"/>
    <property type="evidence" value="ECO:0007669"/>
    <property type="project" value="TreeGrafter"/>
</dbReference>
<dbReference type="GO" id="GO:0005524">
    <property type="term" value="F:ATP binding"/>
    <property type="evidence" value="ECO:0007669"/>
    <property type="project" value="UniProtKB-KW"/>
</dbReference>
<dbReference type="GO" id="GO:0004349">
    <property type="term" value="F:glutamate 5-kinase activity"/>
    <property type="evidence" value="ECO:0007669"/>
    <property type="project" value="UniProtKB-UniRule"/>
</dbReference>
<dbReference type="GO" id="GO:0003723">
    <property type="term" value="F:RNA binding"/>
    <property type="evidence" value="ECO:0007669"/>
    <property type="project" value="InterPro"/>
</dbReference>
<dbReference type="GO" id="GO:0055129">
    <property type="term" value="P:L-proline biosynthetic process"/>
    <property type="evidence" value="ECO:0007669"/>
    <property type="project" value="UniProtKB-UniRule"/>
</dbReference>
<dbReference type="CDD" id="cd04242">
    <property type="entry name" value="AAK_G5K_ProB"/>
    <property type="match status" value="1"/>
</dbReference>
<dbReference type="CDD" id="cd21157">
    <property type="entry name" value="PUA_G5K"/>
    <property type="match status" value="1"/>
</dbReference>
<dbReference type="FunFam" id="2.30.130.10:FF:000003">
    <property type="entry name" value="Glutamate 5-kinase"/>
    <property type="match status" value="1"/>
</dbReference>
<dbReference type="FunFam" id="3.40.1160.10:FF:000006">
    <property type="entry name" value="Glutamate 5-kinase"/>
    <property type="match status" value="1"/>
</dbReference>
<dbReference type="Gene3D" id="3.40.1160.10">
    <property type="entry name" value="Acetylglutamate kinase-like"/>
    <property type="match status" value="2"/>
</dbReference>
<dbReference type="Gene3D" id="2.30.130.10">
    <property type="entry name" value="PUA domain"/>
    <property type="match status" value="1"/>
</dbReference>
<dbReference type="HAMAP" id="MF_00456">
    <property type="entry name" value="ProB"/>
    <property type="match status" value="1"/>
</dbReference>
<dbReference type="InterPro" id="IPR036393">
    <property type="entry name" value="AceGlu_kinase-like_sf"/>
</dbReference>
<dbReference type="InterPro" id="IPR001048">
    <property type="entry name" value="Asp/Glu/Uridylate_kinase"/>
</dbReference>
<dbReference type="InterPro" id="IPR041739">
    <property type="entry name" value="G5K_ProB"/>
</dbReference>
<dbReference type="InterPro" id="IPR001057">
    <property type="entry name" value="Glu/AcGlu_kinase"/>
</dbReference>
<dbReference type="InterPro" id="IPR011529">
    <property type="entry name" value="Glu_5kinase"/>
</dbReference>
<dbReference type="InterPro" id="IPR005715">
    <property type="entry name" value="Glu_5kinase/COase_Synthase"/>
</dbReference>
<dbReference type="InterPro" id="IPR019797">
    <property type="entry name" value="Glutamate_5-kinase_CS"/>
</dbReference>
<dbReference type="InterPro" id="IPR002478">
    <property type="entry name" value="PUA"/>
</dbReference>
<dbReference type="InterPro" id="IPR015947">
    <property type="entry name" value="PUA-like_sf"/>
</dbReference>
<dbReference type="InterPro" id="IPR036974">
    <property type="entry name" value="PUA_sf"/>
</dbReference>
<dbReference type="NCBIfam" id="TIGR01027">
    <property type="entry name" value="proB"/>
    <property type="match status" value="1"/>
</dbReference>
<dbReference type="PANTHER" id="PTHR43654">
    <property type="entry name" value="GLUTAMATE 5-KINASE"/>
    <property type="match status" value="1"/>
</dbReference>
<dbReference type="PANTHER" id="PTHR43654:SF1">
    <property type="entry name" value="ISOPENTENYL PHOSPHATE KINASE"/>
    <property type="match status" value="1"/>
</dbReference>
<dbReference type="Pfam" id="PF00696">
    <property type="entry name" value="AA_kinase"/>
    <property type="match status" value="1"/>
</dbReference>
<dbReference type="Pfam" id="PF01472">
    <property type="entry name" value="PUA"/>
    <property type="match status" value="1"/>
</dbReference>
<dbReference type="PIRSF" id="PIRSF000729">
    <property type="entry name" value="GK"/>
    <property type="match status" value="1"/>
</dbReference>
<dbReference type="PRINTS" id="PR00474">
    <property type="entry name" value="GLU5KINASE"/>
</dbReference>
<dbReference type="SMART" id="SM00359">
    <property type="entry name" value="PUA"/>
    <property type="match status" value="1"/>
</dbReference>
<dbReference type="SUPFAM" id="SSF53633">
    <property type="entry name" value="Carbamate kinase-like"/>
    <property type="match status" value="1"/>
</dbReference>
<dbReference type="SUPFAM" id="SSF88697">
    <property type="entry name" value="PUA domain-like"/>
    <property type="match status" value="1"/>
</dbReference>
<dbReference type="PROSITE" id="PS00902">
    <property type="entry name" value="GLUTAMATE_5_KINASE"/>
    <property type="match status" value="1"/>
</dbReference>
<dbReference type="PROSITE" id="PS50890">
    <property type="entry name" value="PUA"/>
    <property type="match status" value="1"/>
</dbReference>
<accession>Q57ST3</accession>
<comment type="function">
    <text evidence="1">Catalyzes the transfer of a phosphate group to glutamate to form L-glutamate 5-phosphate.</text>
</comment>
<comment type="catalytic activity">
    <reaction evidence="1">
        <text>L-glutamate + ATP = L-glutamyl 5-phosphate + ADP</text>
        <dbReference type="Rhea" id="RHEA:14877"/>
        <dbReference type="ChEBI" id="CHEBI:29985"/>
        <dbReference type="ChEBI" id="CHEBI:30616"/>
        <dbReference type="ChEBI" id="CHEBI:58274"/>
        <dbReference type="ChEBI" id="CHEBI:456216"/>
        <dbReference type="EC" id="2.7.2.11"/>
    </reaction>
</comment>
<comment type="pathway">
    <text evidence="1">Amino-acid biosynthesis; L-proline biosynthesis; L-glutamate 5-semialdehyde from L-glutamate: step 1/2.</text>
</comment>
<comment type="subcellular location">
    <subcellularLocation>
        <location evidence="1">Cytoplasm</location>
    </subcellularLocation>
</comment>
<comment type="similarity">
    <text evidence="1">Belongs to the glutamate 5-kinase family.</text>
</comment>
<reference key="1">
    <citation type="journal article" date="2005" name="Nucleic Acids Res.">
        <title>The genome sequence of Salmonella enterica serovar Choleraesuis, a highly invasive and resistant zoonotic pathogen.</title>
        <authorList>
            <person name="Chiu C.-H."/>
            <person name="Tang P."/>
            <person name="Chu C."/>
            <person name="Hu S."/>
            <person name="Bao Q."/>
            <person name="Yu J."/>
            <person name="Chou Y.-Y."/>
            <person name="Wang H.-S."/>
            <person name="Lee Y.-S."/>
        </authorList>
    </citation>
    <scope>NUCLEOTIDE SEQUENCE [LARGE SCALE GENOMIC DNA]</scope>
    <source>
        <strain>SC-B67</strain>
    </source>
</reference>
<feature type="chain" id="PRO_0000109719" description="Glutamate 5-kinase">
    <location>
        <begin position="1"/>
        <end position="367"/>
    </location>
</feature>
<feature type="domain" description="PUA" evidence="1">
    <location>
        <begin position="275"/>
        <end position="353"/>
    </location>
</feature>
<feature type="binding site" evidence="1">
    <location>
        <position position="10"/>
    </location>
    <ligand>
        <name>ATP</name>
        <dbReference type="ChEBI" id="CHEBI:30616"/>
    </ligand>
</feature>
<feature type="binding site" evidence="1">
    <location>
        <position position="50"/>
    </location>
    <ligand>
        <name>substrate</name>
    </ligand>
</feature>
<feature type="binding site" evidence="1">
    <location>
        <position position="137"/>
    </location>
    <ligand>
        <name>substrate</name>
    </ligand>
</feature>
<feature type="binding site" evidence="1">
    <location>
        <position position="149"/>
    </location>
    <ligand>
        <name>substrate</name>
    </ligand>
</feature>
<feature type="binding site" evidence="1">
    <location>
        <begin position="169"/>
        <end position="170"/>
    </location>
    <ligand>
        <name>ATP</name>
        <dbReference type="ChEBI" id="CHEBI:30616"/>
    </ligand>
</feature>
<feature type="binding site" evidence="1">
    <location>
        <begin position="211"/>
        <end position="217"/>
    </location>
    <ligand>
        <name>ATP</name>
        <dbReference type="ChEBI" id="CHEBI:30616"/>
    </ligand>
</feature>
<keyword id="KW-0028">Amino-acid biosynthesis</keyword>
<keyword id="KW-0067">ATP-binding</keyword>
<keyword id="KW-0963">Cytoplasm</keyword>
<keyword id="KW-0418">Kinase</keyword>
<keyword id="KW-0547">Nucleotide-binding</keyword>
<keyword id="KW-0641">Proline biosynthesis</keyword>
<keyword id="KW-0808">Transferase</keyword>
<sequence length="367" mass="39141">MSDSQTLVVKLGTSVLTGGSRRLNRAHIVELVRQCAQLHAAGHRIVIVTSGAIAAGREHLGYPELPATIASKQLLAAVGQSRLIQLWEQLFSIYGIHIGQMLLTRADMEDRERFLNARDTLRALLDNHIVPVINENDAVATAEIKVGDNDNLSALAAILAGADKLLLLTDQQGLFTADPRSNPQAELIKDVYGVDDALRSIAGDSVSGLGTGGMSTKLQAADVACRAGIDTIIASGSKPGVIGDVMEGISVGTRFHAQASPLENRKRWIFGAPPAGEITVDEGATAAMLERGSSLLPKGIKSVTGNFSRGEVIRICNLQGRDIAHGVSRYNSDALRRIAGHHSQQIDAILGYEYGPVAVHRDDMITR</sequence>
<evidence type="ECO:0000255" key="1">
    <source>
        <dbReference type="HAMAP-Rule" id="MF_00456"/>
    </source>
</evidence>